<accession>C1KVJ2</accession>
<proteinExistence type="inferred from homology"/>
<protein>
    <recommendedName>
        <fullName evidence="1">Probable septum site-determining protein MinC</fullName>
    </recommendedName>
</protein>
<keyword id="KW-0131">Cell cycle</keyword>
<keyword id="KW-0132">Cell division</keyword>
<keyword id="KW-0717">Septation</keyword>
<sequence length="225" mass="25031">MKKNVQIKGTKDGISIFLSDKASISELQQELTQLLADQKQNPYSGEKLEVQVQIGNRLFSEEEEREISTIIHENSQMKISAFYSNVMSKDEAKKWKENDQIFSMATIIRSGQVVQVPGDFLLIGDVNPGGQIRSNGNVFVLGNIKGIIHAGFEGNGNAIVAGKFLYPSQVRIADKVYGFDSEDYKEVTETDLFSAFVNDAGEIVIDGIHKIRKIRPEISNFQGGR</sequence>
<comment type="function">
    <text evidence="1">Cell division inhibitor that blocks the formation of polar Z ring septums. Rapidly oscillates between the poles of the cell to destabilize FtsZ filaments that have formed before they mature into polar Z rings. Prevents FtsZ polymerization.</text>
</comment>
<comment type="subunit">
    <text evidence="1">Interacts with MinD and FtsZ.</text>
</comment>
<comment type="similarity">
    <text evidence="1">Belongs to the MinC family.</text>
</comment>
<organism>
    <name type="scientific">Listeria monocytogenes serotype 4b (strain CLIP80459)</name>
    <dbReference type="NCBI Taxonomy" id="568819"/>
    <lineage>
        <taxon>Bacteria</taxon>
        <taxon>Bacillati</taxon>
        <taxon>Bacillota</taxon>
        <taxon>Bacilli</taxon>
        <taxon>Bacillales</taxon>
        <taxon>Listeriaceae</taxon>
        <taxon>Listeria</taxon>
    </lineage>
</organism>
<gene>
    <name evidence="1" type="primary">minC</name>
    <name type="ordered locus">Lm4b_01556</name>
</gene>
<feature type="chain" id="PRO_1000204698" description="Probable septum site-determining protein MinC">
    <location>
        <begin position="1"/>
        <end position="225"/>
    </location>
</feature>
<dbReference type="EMBL" id="FM242711">
    <property type="protein sequence ID" value="CAS05317.1"/>
    <property type="molecule type" value="Genomic_DNA"/>
</dbReference>
<dbReference type="RefSeq" id="WP_003725673.1">
    <property type="nucleotide sequence ID" value="NC_012488.1"/>
</dbReference>
<dbReference type="SMR" id="C1KVJ2"/>
<dbReference type="KEGG" id="lmc:Lm4b_01556"/>
<dbReference type="HOGENOM" id="CLU_048711_1_1_9"/>
<dbReference type="GO" id="GO:0000902">
    <property type="term" value="P:cell morphogenesis"/>
    <property type="evidence" value="ECO:0007669"/>
    <property type="project" value="InterPro"/>
</dbReference>
<dbReference type="GO" id="GO:0000917">
    <property type="term" value="P:division septum assembly"/>
    <property type="evidence" value="ECO:0007669"/>
    <property type="project" value="UniProtKB-KW"/>
</dbReference>
<dbReference type="GO" id="GO:1901891">
    <property type="term" value="P:regulation of cell septum assembly"/>
    <property type="evidence" value="ECO:0007669"/>
    <property type="project" value="InterPro"/>
</dbReference>
<dbReference type="FunFam" id="2.160.20.70:FF:000013">
    <property type="entry name" value="Probable septum site-determining protein MinC"/>
    <property type="match status" value="1"/>
</dbReference>
<dbReference type="FunFam" id="3.30.160.540:FF:000002">
    <property type="entry name" value="Probable septum site-determining protein MinC"/>
    <property type="match status" value="1"/>
</dbReference>
<dbReference type="Gene3D" id="2.160.20.70">
    <property type="match status" value="1"/>
</dbReference>
<dbReference type="Gene3D" id="3.30.160.540">
    <property type="match status" value="1"/>
</dbReference>
<dbReference type="HAMAP" id="MF_00267">
    <property type="entry name" value="MinC"/>
    <property type="match status" value="1"/>
</dbReference>
<dbReference type="InterPro" id="IPR016098">
    <property type="entry name" value="CAP/MinC_C"/>
</dbReference>
<dbReference type="InterPro" id="IPR013033">
    <property type="entry name" value="MinC"/>
</dbReference>
<dbReference type="InterPro" id="IPR036145">
    <property type="entry name" value="MinC_C_sf"/>
</dbReference>
<dbReference type="InterPro" id="IPR055219">
    <property type="entry name" value="MinC_N_1"/>
</dbReference>
<dbReference type="InterPro" id="IPR005526">
    <property type="entry name" value="Septum_form_inhib_MinC_C"/>
</dbReference>
<dbReference type="NCBIfam" id="NF001772">
    <property type="entry name" value="PRK00513.1-3"/>
    <property type="match status" value="1"/>
</dbReference>
<dbReference type="PANTHER" id="PTHR34108">
    <property type="entry name" value="SEPTUM SITE-DETERMINING PROTEIN MINC"/>
    <property type="match status" value="1"/>
</dbReference>
<dbReference type="PANTHER" id="PTHR34108:SF1">
    <property type="entry name" value="SEPTUM SITE-DETERMINING PROTEIN MINC"/>
    <property type="match status" value="1"/>
</dbReference>
<dbReference type="Pfam" id="PF03775">
    <property type="entry name" value="MinC_C"/>
    <property type="match status" value="1"/>
</dbReference>
<dbReference type="Pfam" id="PF22642">
    <property type="entry name" value="MinC_N_1"/>
    <property type="match status" value="1"/>
</dbReference>
<dbReference type="SUPFAM" id="SSF63848">
    <property type="entry name" value="Cell-division inhibitor MinC, C-terminal domain"/>
    <property type="match status" value="1"/>
</dbReference>
<evidence type="ECO:0000255" key="1">
    <source>
        <dbReference type="HAMAP-Rule" id="MF_00267"/>
    </source>
</evidence>
<name>MINC_LISMC</name>
<reference key="1">
    <citation type="journal article" date="2012" name="BMC Genomics">
        <title>Comparative genomics and transcriptomics of lineages I, II, and III strains of Listeria monocytogenes.</title>
        <authorList>
            <person name="Hain T."/>
            <person name="Ghai R."/>
            <person name="Billion A."/>
            <person name="Kuenne C.T."/>
            <person name="Steinweg C."/>
            <person name="Izar B."/>
            <person name="Mohamed W."/>
            <person name="Mraheil M."/>
            <person name="Domann E."/>
            <person name="Schaffrath S."/>
            <person name="Karst U."/>
            <person name="Goesmann A."/>
            <person name="Oehm S."/>
            <person name="Puhler A."/>
            <person name="Merkl R."/>
            <person name="Vorwerk S."/>
            <person name="Glaser P."/>
            <person name="Garrido P."/>
            <person name="Rusniok C."/>
            <person name="Buchrieser C."/>
            <person name="Goebel W."/>
            <person name="Chakraborty T."/>
        </authorList>
    </citation>
    <scope>NUCLEOTIDE SEQUENCE [LARGE SCALE GENOMIC DNA]</scope>
    <source>
        <strain>CLIP80459</strain>
    </source>
</reference>